<reference key="1">
    <citation type="journal article" date="2008" name="Nat. Biotechnol.">
        <title>Genome sequencing and analysis of the filamentous fungus Penicillium chrysogenum.</title>
        <authorList>
            <person name="van den Berg M.A."/>
            <person name="Albang R."/>
            <person name="Albermann K."/>
            <person name="Badger J.H."/>
            <person name="Daran J.-M."/>
            <person name="Driessen A.J.M."/>
            <person name="Garcia-Estrada C."/>
            <person name="Fedorova N.D."/>
            <person name="Harris D.M."/>
            <person name="Heijne W.H.M."/>
            <person name="Joardar V.S."/>
            <person name="Kiel J.A.K.W."/>
            <person name="Kovalchuk A."/>
            <person name="Martin J.F."/>
            <person name="Nierman W.C."/>
            <person name="Nijland J.G."/>
            <person name="Pronk J.T."/>
            <person name="Roubos J.A."/>
            <person name="van der Klei I.J."/>
            <person name="van Peij N.N.M.E."/>
            <person name="Veenhuis M."/>
            <person name="von Doehren H."/>
            <person name="Wagner C."/>
            <person name="Wortman J.R."/>
            <person name="Bovenberg R.A.L."/>
        </authorList>
    </citation>
    <scope>NUCLEOTIDE SEQUENCE [LARGE SCALE GENOMIC DNA]</scope>
    <source>
        <strain>ATCC 28089 / DSM 1075 / NRRL 1951 / Wisconsin 54-1255</strain>
    </source>
</reference>
<reference key="2">
    <citation type="journal article" date="2022" name="J. Fungi">
        <title>Biosynthesis of xylariolide D in Penicillium crustosum implies a chain branching reaction catalyzed by a highly reducing polyketide synthase.</title>
        <authorList>
            <person name="Stierle S.A."/>
            <person name="Li S.M."/>
        </authorList>
    </citation>
    <scope>FUNCTION</scope>
    <scope>CATALYTIC ACTIVITY</scope>
    <scope>PATHWAY</scope>
</reference>
<comment type="function">
    <text evidence="6 7">Highly reducing polyketide synthase; part of the gene cluster that mediates the biosynthesis of the 6-methyl-2-pyrone derivative xylariolide D (PubMed:35628749). XilA produces the 5-alkyl-6-methyl-2-pyrone backbone called prexylariolide D via sequential condensations of 4 malonyl-CoA units with one acetyl-CoA starter unit (PubMed:35628749). During the biosynthesis, the linear polyketide chain is branched by the addition of an acetyl unit as the origin of the methyl group at the 2-pyrone ring (PubMed:18820685). Prexylariolide D is then hydroxylated at the side chain by xilC to form the final product, xylariolide D (PubMed:35628749).</text>
</comment>
<comment type="cofactor">
    <cofactor evidence="2">
        <name>pantetheine 4'-phosphate</name>
        <dbReference type="ChEBI" id="CHEBI:47942"/>
    </cofactor>
</comment>
<comment type="pathway">
    <text evidence="7">Secondary metabolite biosynthesis.</text>
</comment>
<comment type="domain">
    <text evidence="9">Multidomain protein; including a ketosynthase (KS) that catalyzes repeated decarboxylative condensation to elongate the polyketide backbone; a malonyl-CoA:ACP transacylase (MAT) that selects and transfers the extender unit malonyl-CoA; a dehydratase (DH) domain that reduces hydroxyl groups to enoyl groups; a methyltransferase (CMeT) domain responsible for the incorporation of methyl groups; an enoylreductase (ER) domain that reduces enoyl groups to alkyl group; a ketoreductase (KR) domain that catalyzes beta-ketoreduction steps; and an acyl-carrier protein (ACP) that serves as the tether of the growing and completed polyketide via its phosphopantetheinyl arm.</text>
</comment>
<dbReference type="EC" id="3.2.1.-" evidence="7"/>
<dbReference type="EMBL" id="AM920431">
    <property type="protein sequence ID" value="CAP93159.1"/>
    <property type="molecule type" value="Genomic_DNA"/>
</dbReference>
<dbReference type="RefSeq" id="XP_002560839.1">
    <property type="nucleotide sequence ID" value="XM_002560793.1"/>
</dbReference>
<dbReference type="SMR" id="B6H999"/>
<dbReference type="STRING" id="500485.B6H999"/>
<dbReference type="VEuPathDB" id="FungiDB:PCH_Pc16g04890"/>
<dbReference type="eggNOG" id="KOG1202">
    <property type="taxonomic scope" value="Eukaryota"/>
</dbReference>
<dbReference type="HOGENOM" id="CLU_000022_31_1_1"/>
<dbReference type="OMA" id="LRPQWRN"/>
<dbReference type="OrthoDB" id="329835at2759"/>
<dbReference type="BioCyc" id="PCHR:PC16G04890-MONOMER"/>
<dbReference type="Proteomes" id="UP000000724">
    <property type="component" value="Contig Pc00c16"/>
</dbReference>
<dbReference type="GO" id="GO:0004315">
    <property type="term" value="F:3-oxoacyl-[acyl-carrier-protein] synthase activity"/>
    <property type="evidence" value="ECO:0007669"/>
    <property type="project" value="InterPro"/>
</dbReference>
<dbReference type="GO" id="GO:0004312">
    <property type="term" value="F:fatty acid synthase activity"/>
    <property type="evidence" value="ECO:0007669"/>
    <property type="project" value="TreeGrafter"/>
</dbReference>
<dbReference type="GO" id="GO:0016787">
    <property type="term" value="F:hydrolase activity"/>
    <property type="evidence" value="ECO:0007669"/>
    <property type="project" value="UniProtKB-KW"/>
</dbReference>
<dbReference type="GO" id="GO:0008168">
    <property type="term" value="F:methyltransferase activity"/>
    <property type="evidence" value="ECO:0007669"/>
    <property type="project" value="UniProtKB-KW"/>
</dbReference>
<dbReference type="GO" id="GO:0016491">
    <property type="term" value="F:oxidoreductase activity"/>
    <property type="evidence" value="ECO:0007669"/>
    <property type="project" value="UniProtKB-KW"/>
</dbReference>
<dbReference type="GO" id="GO:0031177">
    <property type="term" value="F:phosphopantetheine binding"/>
    <property type="evidence" value="ECO:0007669"/>
    <property type="project" value="InterPro"/>
</dbReference>
<dbReference type="GO" id="GO:0006633">
    <property type="term" value="P:fatty acid biosynthetic process"/>
    <property type="evidence" value="ECO:0007669"/>
    <property type="project" value="InterPro"/>
</dbReference>
<dbReference type="GO" id="GO:1901336">
    <property type="term" value="P:lactone biosynthetic process"/>
    <property type="evidence" value="ECO:0007669"/>
    <property type="project" value="UniProtKB-ARBA"/>
</dbReference>
<dbReference type="GO" id="GO:0032259">
    <property type="term" value="P:methylation"/>
    <property type="evidence" value="ECO:0007669"/>
    <property type="project" value="UniProtKB-KW"/>
</dbReference>
<dbReference type="GO" id="GO:0030639">
    <property type="term" value="P:polyketide biosynthetic process"/>
    <property type="evidence" value="ECO:0007669"/>
    <property type="project" value="UniProtKB-ARBA"/>
</dbReference>
<dbReference type="CDD" id="cd05195">
    <property type="entry name" value="enoyl_red"/>
    <property type="match status" value="1"/>
</dbReference>
<dbReference type="CDD" id="cd05274">
    <property type="entry name" value="KR_FAS_SDR_x"/>
    <property type="match status" value="1"/>
</dbReference>
<dbReference type="CDD" id="cd00833">
    <property type="entry name" value="PKS"/>
    <property type="match status" value="1"/>
</dbReference>
<dbReference type="Gene3D" id="3.30.70.3290">
    <property type="match status" value="1"/>
</dbReference>
<dbReference type="Gene3D" id="3.40.47.10">
    <property type="match status" value="1"/>
</dbReference>
<dbReference type="Gene3D" id="1.10.1200.10">
    <property type="entry name" value="ACP-like"/>
    <property type="match status" value="1"/>
</dbReference>
<dbReference type="Gene3D" id="3.40.366.10">
    <property type="entry name" value="Malonyl-Coenzyme A Acyl Carrier Protein, domain 2"/>
    <property type="match status" value="1"/>
</dbReference>
<dbReference type="Gene3D" id="3.90.180.10">
    <property type="entry name" value="Medium-chain alcohol dehydrogenases, catalytic domain"/>
    <property type="match status" value="1"/>
</dbReference>
<dbReference type="Gene3D" id="3.40.50.720">
    <property type="entry name" value="NAD(P)-binding Rossmann-like Domain"/>
    <property type="match status" value="3"/>
</dbReference>
<dbReference type="Gene3D" id="3.10.129.110">
    <property type="entry name" value="Polyketide synthase dehydratase"/>
    <property type="match status" value="1"/>
</dbReference>
<dbReference type="Gene3D" id="3.40.50.150">
    <property type="entry name" value="Vaccinia Virus protein VP39"/>
    <property type="match status" value="1"/>
</dbReference>
<dbReference type="InterPro" id="IPR001227">
    <property type="entry name" value="Ac_transferase_dom_sf"/>
</dbReference>
<dbReference type="InterPro" id="IPR036736">
    <property type="entry name" value="ACP-like_sf"/>
</dbReference>
<dbReference type="InterPro" id="IPR014043">
    <property type="entry name" value="Acyl_transferase_dom"/>
</dbReference>
<dbReference type="InterPro" id="IPR016035">
    <property type="entry name" value="Acyl_Trfase/lysoPLipase"/>
</dbReference>
<dbReference type="InterPro" id="IPR013149">
    <property type="entry name" value="ADH-like_C"/>
</dbReference>
<dbReference type="InterPro" id="IPR013154">
    <property type="entry name" value="ADH-like_N"/>
</dbReference>
<dbReference type="InterPro" id="IPR011032">
    <property type="entry name" value="GroES-like_sf"/>
</dbReference>
<dbReference type="InterPro" id="IPR018201">
    <property type="entry name" value="Ketoacyl_synth_AS"/>
</dbReference>
<dbReference type="InterPro" id="IPR014031">
    <property type="entry name" value="Ketoacyl_synth_C"/>
</dbReference>
<dbReference type="InterPro" id="IPR014030">
    <property type="entry name" value="Ketoacyl_synth_N"/>
</dbReference>
<dbReference type="InterPro" id="IPR016036">
    <property type="entry name" value="Malonyl_transacylase_ACP-bd"/>
</dbReference>
<dbReference type="InterPro" id="IPR036291">
    <property type="entry name" value="NAD(P)-bd_dom_sf"/>
</dbReference>
<dbReference type="InterPro" id="IPR032821">
    <property type="entry name" value="PKS_assoc"/>
</dbReference>
<dbReference type="InterPro" id="IPR020841">
    <property type="entry name" value="PKS_Beta-ketoAc_synthase_dom"/>
</dbReference>
<dbReference type="InterPro" id="IPR042104">
    <property type="entry name" value="PKS_dehydratase_sf"/>
</dbReference>
<dbReference type="InterPro" id="IPR020807">
    <property type="entry name" value="PKS_DH"/>
</dbReference>
<dbReference type="InterPro" id="IPR049551">
    <property type="entry name" value="PKS_DH_C"/>
</dbReference>
<dbReference type="InterPro" id="IPR049552">
    <property type="entry name" value="PKS_DH_N"/>
</dbReference>
<dbReference type="InterPro" id="IPR020843">
    <property type="entry name" value="PKS_ER"/>
</dbReference>
<dbReference type="InterPro" id="IPR013968">
    <property type="entry name" value="PKS_KR"/>
</dbReference>
<dbReference type="InterPro" id="IPR049900">
    <property type="entry name" value="PKS_mFAS_DH"/>
</dbReference>
<dbReference type="InterPro" id="IPR050091">
    <property type="entry name" value="PKS_NRPS_Biosynth_Enz"/>
</dbReference>
<dbReference type="InterPro" id="IPR020806">
    <property type="entry name" value="PKS_PP-bd"/>
</dbReference>
<dbReference type="InterPro" id="IPR009081">
    <property type="entry name" value="PP-bd_ACP"/>
</dbReference>
<dbReference type="InterPro" id="IPR029063">
    <property type="entry name" value="SAM-dependent_MTases_sf"/>
</dbReference>
<dbReference type="InterPro" id="IPR016039">
    <property type="entry name" value="Thiolase-like"/>
</dbReference>
<dbReference type="PANTHER" id="PTHR43775">
    <property type="entry name" value="FATTY ACID SYNTHASE"/>
    <property type="match status" value="1"/>
</dbReference>
<dbReference type="PANTHER" id="PTHR43775:SF50">
    <property type="entry name" value="HIGHLY REDUCING POLYKETIDE SYNTHASE SRDA"/>
    <property type="match status" value="1"/>
</dbReference>
<dbReference type="Pfam" id="PF00698">
    <property type="entry name" value="Acyl_transf_1"/>
    <property type="match status" value="1"/>
</dbReference>
<dbReference type="Pfam" id="PF08240">
    <property type="entry name" value="ADH_N"/>
    <property type="match status" value="1"/>
</dbReference>
<dbReference type="Pfam" id="PF00107">
    <property type="entry name" value="ADH_zinc_N"/>
    <property type="match status" value="1"/>
</dbReference>
<dbReference type="Pfam" id="PF22621">
    <property type="entry name" value="CurL-like_PKS_C"/>
    <property type="match status" value="1"/>
</dbReference>
<dbReference type="Pfam" id="PF16197">
    <property type="entry name" value="KAsynt_C_assoc"/>
    <property type="match status" value="1"/>
</dbReference>
<dbReference type="Pfam" id="PF00109">
    <property type="entry name" value="ketoacyl-synt"/>
    <property type="match status" value="1"/>
</dbReference>
<dbReference type="Pfam" id="PF02801">
    <property type="entry name" value="Ketoacyl-synt_C"/>
    <property type="match status" value="1"/>
</dbReference>
<dbReference type="Pfam" id="PF08659">
    <property type="entry name" value="KR"/>
    <property type="match status" value="1"/>
</dbReference>
<dbReference type="Pfam" id="PF21089">
    <property type="entry name" value="PKS_DH_N"/>
    <property type="match status" value="1"/>
</dbReference>
<dbReference type="Pfam" id="PF00550">
    <property type="entry name" value="PP-binding"/>
    <property type="match status" value="1"/>
</dbReference>
<dbReference type="Pfam" id="PF14765">
    <property type="entry name" value="PS-DH"/>
    <property type="match status" value="1"/>
</dbReference>
<dbReference type="SMART" id="SM00827">
    <property type="entry name" value="PKS_AT"/>
    <property type="match status" value="1"/>
</dbReference>
<dbReference type="SMART" id="SM00826">
    <property type="entry name" value="PKS_DH"/>
    <property type="match status" value="1"/>
</dbReference>
<dbReference type="SMART" id="SM00829">
    <property type="entry name" value="PKS_ER"/>
    <property type="match status" value="1"/>
</dbReference>
<dbReference type="SMART" id="SM00822">
    <property type="entry name" value="PKS_KR"/>
    <property type="match status" value="1"/>
</dbReference>
<dbReference type="SMART" id="SM00825">
    <property type="entry name" value="PKS_KS"/>
    <property type="match status" value="1"/>
</dbReference>
<dbReference type="SMART" id="SM00823">
    <property type="entry name" value="PKS_PP"/>
    <property type="match status" value="1"/>
</dbReference>
<dbReference type="SUPFAM" id="SSF47336">
    <property type="entry name" value="ACP-like"/>
    <property type="match status" value="1"/>
</dbReference>
<dbReference type="SUPFAM" id="SSF52151">
    <property type="entry name" value="FabD/lysophospholipase-like"/>
    <property type="match status" value="1"/>
</dbReference>
<dbReference type="SUPFAM" id="SSF50129">
    <property type="entry name" value="GroES-like"/>
    <property type="match status" value="1"/>
</dbReference>
<dbReference type="SUPFAM" id="SSF51735">
    <property type="entry name" value="NAD(P)-binding Rossmann-fold domains"/>
    <property type="match status" value="2"/>
</dbReference>
<dbReference type="SUPFAM" id="SSF55048">
    <property type="entry name" value="Probable ACP-binding domain of malonyl-CoA ACP transacylase"/>
    <property type="match status" value="1"/>
</dbReference>
<dbReference type="SUPFAM" id="SSF53335">
    <property type="entry name" value="S-adenosyl-L-methionine-dependent methyltransferases"/>
    <property type="match status" value="1"/>
</dbReference>
<dbReference type="SUPFAM" id="SSF53901">
    <property type="entry name" value="Thiolase-like"/>
    <property type="match status" value="1"/>
</dbReference>
<dbReference type="PROSITE" id="PS50075">
    <property type="entry name" value="CARRIER"/>
    <property type="match status" value="1"/>
</dbReference>
<dbReference type="PROSITE" id="PS00606">
    <property type="entry name" value="KS3_1"/>
    <property type="match status" value="1"/>
</dbReference>
<dbReference type="PROSITE" id="PS52004">
    <property type="entry name" value="KS3_2"/>
    <property type="match status" value="1"/>
</dbReference>
<dbReference type="PROSITE" id="PS52019">
    <property type="entry name" value="PKS_MFAS_DH"/>
    <property type="match status" value="12"/>
</dbReference>
<gene>
    <name evidence="8" type="primary">xilA</name>
    <name type="ORF">Pc16g04890</name>
    <name type="ORF">PCH_Pc16g04890</name>
</gene>
<accession>B6H999</accession>
<organism>
    <name type="scientific">Penicillium rubens (strain ATCC 28089 / DSM 1075 / NRRL 1951 / Wisconsin 54-1255)</name>
    <name type="common">Penicillium chrysogenum</name>
    <dbReference type="NCBI Taxonomy" id="500485"/>
    <lineage>
        <taxon>Eukaryota</taxon>
        <taxon>Fungi</taxon>
        <taxon>Dikarya</taxon>
        <taxon>Ascomycota</taxon>
        <taxon>Pezizomycotina</taxon>
        <taxon>Eurotiomycetes</taxon>
        <taxon>Eurotiomycetidae</taxon>
        <taxon>Eurotiales</taxon>
        <taxon>Aspergillaceae</taxon>
        <taxon>Penicillium</taxon>
        <taxon>Penicillium chrysogenum species complex</taxon>
    </lineage>
</organism>
<feature type="chain" id="PRO_0000459616" description="Highly reducing polyketide synthase xilA">
    <location>
        <begin position="1"/>
        <end position="2464"/>
    </location>
</feature>
<feature type="domain" description="Ketosynthase family 3 (KS3)" evidence="3">
    <location>
        <begin position="9"/>
        <end position="437"/>
    </location>
</feature>
<feature type="domain" description="Malonyl-CoA:ACP transacylase (MAT)" evidence="1">
    <location>
        <begin position="589"/>
        <end position="911"/>
    </location>
</feature>
<feature type="domain" description="PKS/mFAS DH" evidence="4">
    <location>
        <begin position="983"/>
        <end position="1286"/>
    </location>
</feature>
<feature type="domain" description="Enoyl reductase (ER)" evidence="1">
    <location>
        <begin position="1716"/>
        <end position="2028"/>
    </location>
</feature>
<feature type="domain" description="Ketoreductase (KR)" evidence="1">
    <location>
        <begin position="2052"/>
        <end position="2231"/>
    </location>
</feature>
<feature type="domain" description="Carrier" evidence="2">
    <location>
        <begin position="2383"/>
        <end position="2461"/>
    </location>
</feature>
<feature type="region of interest" description="Disordered" evidence="5">
    <location>
        <begin position="461"/>
        <end position="495"/>
    </location>
</feature>
<feature type="region of interest" description="N-terminal hotdog fold" evidence="4">
    <location>
        <begin position="983"/>
        <end position="1121"/>
    </location>
</feature>
<feature type="region of interest" description="C-terminal hotdog fold" evidence="4">
    <location>
        <begin position="1133"/>
        <end position="1286"/>
    </location>
</feature>
<feature type="region of interest" description="Methyltransferase (CMeT) domain" evidence="1 9">
    <location>
        <begin position="1282"/>
        <end position="1490"/>
    </location>
</feature>
<feature type="compositionally biased region" description="Low complexity" evidence="5">
    <location>
        <begin position="461"/>
        <end position="487"/>
    </location>
</feature>
<feature type="active site" description="For beta-ketoacyl synthase activity" evidence="3">
    <location>
        <position position="182"/>
    </location>
</feature>
<feature type="active site" description="For beta-ketoacyl synthase activity" evidence="3">
    <location>
        <position position="318"/>
    </location>
</feature>
<feature type="active site" description="For beta-ketoacyl synthase activity" evidence="3">
    <location>
        <position position="360"/>
    </location>
</feature>
<feature type="active site" description="Proton acceptor; for dehydratase activity" evidence="4">
    <location>
        <position position="1015"/>
    </location>
</feature>
<feature type="active site" description="Proton donor; for dehydratase activity" evidence="4">
    <location>
        <position position="1199"/>
    </location>
</feature>
<feature type="modified residue" description="O-(pantetheine 4'-phosphoryl)serine" evidence="2">
    <location>
        <position position="2420"/>
    </location>
</feature>
<protein>
    <recommendedName>
        <fullName evidence="8">Highly reducing polyketide synthase xilA</fullName>
        <shortName evidence="8">HR-PKS xilA</shortName>
        <ecNumber evidence="7">3.2.1.-</ecNumber>
    </recommendedName>
    <alternativeName>
        <fullName evidence="8">Xylariolide D biosynthesis cluster protein A</fullName>
    </alternativeName>
</protein>
<keyword id="KW-0012">Acyltransferase</keyword>
<keyword id="KW-0378">Hydrolase</keyword>
<keyword id="KW-0489">Methyltransferase</keyword>
<keyword id="KW-0511">Multifunctional enzyme</keyword>
<keyword id="KW-0521">NADP</keyword>
<keyword id="KW-0560">Oxidoreductase</keyword>
<keyword id="KW-0596">Phosphopantetheine</keyword>
<keyword id="KW-0597">Phosphoprotein</keyword>
<keyword id="KW-1185">Reference proteome</keyword>
<keyword id="KW-0949">S-adenosyl-L-methionine</keyword>
<keyword id="KW-0808">Transferase</keyword>
<sequence length="2464" mass="268633">MTAPWPVKHDPIALVGIGCHMPGGVRDIPALWEFLRKQKDVHREFDEPRFSAKGFSHSNPDRPGTAVARSGFLLDEDPRLFDAAFFGITDNEVETMDASQRKLLEVTYEAFENAGETWEGVSGSRVGVFVGDISFDNYVSQTRDWDYGGKYSATGAFPNMLANRIHYVFNLKGPSLLVNSACTSAMYALHLAMNSIRNGDCESAIVAGSNWIMDPNCHIAMGKLGALSATSRSHTFDASADGYARGEGFAALYLKKTSLAIEDGSPIRALIMGSAINANGRTNGITNPSGPAQEIVIREAYKNAGNLDPSQTTFLECHGTGTRVGDPTEIKAAGNVFGPSRAFEQNDQLVVGSVKTNLGHLEGACALPGILKVVAALEQGEIPPTLGFQTPNPRIDFKQAKARVSTQVEPWPKDKLKRASVTSAGFGGTNGHCIIDHVHNLLPSYVKPGIVGQRVEQLNGQNGINGTNGTNGTNGTNGTNGTNGTNGHHNPKTEAPKLVRKADAGTRKLVVFPFSAHNQTSLVANVDSLNEVIHQHSLADVAYTLSARRSRFMHRTYCIADKDQVPETGLKQENKLEIVSSPQRVSAGFIFTGQGAQWHAMGAGLLQYSVFQNVILYLDSVLSILPEPPSWRIADFIVGNCDTDSIQIPAVSQTVCTAVQIGLVDLLASWSVRPAGVAGHSSGEIAAAYASGRITAAEAIVAAYYRGYMVSFNNQRGAMLAVGFGPEKAMEYIREAGLEERLKVAAINSFDSVTISGDADSVEDLSARLSKESVFNRLLRTGGLAYHSHHMLPFGSAYEEKVNDGLRHIKSLGVDTTSAKYPFIPWTSSVIPDKSTTEVTASYWRANLESPVRFTDAVSNLLSLPGLNIGALIEIGPHPALKGPLGQTMKSLGKVIPHIASLKRNEDAQRLMLDCAGTLFALNVPVNLVAVNAIDGQGPKGEHHLEYGCTAIDLPRYKYTYGPIKYHESRLSKEYRLRPTPRHDLLGSKVPGTTKLRPQWRNMLRLKDLGWLNDHRVPPHVLHPGAAHIVMAMVAAEHKYNEFPDALPIIGLTMRNVSIKKTLVVPEDDHGVEIVLSMELEDGATAKSPGWASFSIASVVRDSDQWTEHCSGQIKIEVSTFEQATPISTTMDGRLVDAQTWYTRFADMGLQFGPSFQGYSDIRADPAKNIASARLALNTTAGMFPGGESTYPIHPASLDLVIRLGLMACNGGQAETASVQLPIHFNQMKFNYGHLEGRDWATGVSRGELRGLRGAYAQLQMLDEEGKVMLDIDNMRFTSLNNEQESTSTGDRACKAYSSPFARLVWRPDIRTLSKDQFNEALKCCQENVGEFPQLCKIFDLAGHANPDLRVLELGASSNAGAGKAVLKTLVGSNNIKRYREYVATDTTEERLESVRESTAEFRDVKYSVLDINEVPSEQGFQSGLYDIIICSDGPQTLQAMQHLRKLVTPAGRLVQVSRTGREITSESLRNVDFELVGEVTEPAHHSTITVHALRVTERHQIHSNRLVHLLHGDQGAPELLHRLAQVLGDLGIAIKVSSLDDTQSVVAPNSHVVAFLDGDNLLFAASQHRIGLFQHLAANTASMMWLTSCGLVKGRNPDGSFVSGLLRTLAAENPAGQFLSVDIDAKDFRVQDTEMDTLVRSLVDVVLSLQQTSEDSHDIVVNHDLAWQDGNMWVSRLVPDAELQGYDQTTMDDQNMKAVPLSTLGPVRAAFRTPGILTSLYFKPYTELWETLPHDWIEIKLEAVGLNWKDLGLCSGRFDQNNLSNEYVGVVSDMGSSVHDLSIGDRVYGMGKGHFGNYTRVPAVLAQKLEAGVDSLEAATMPLVYMTAVYAFEHITRVRKGSKVLIQSASGGLGLAATQLALSKGADVYVTVGTADKAQFLSDVMGISSDHIFSSRRLTDVPRMISATKNGGFDVILSTSQGDMLYESIKALAPLGHLIDVGRMDVTSAKTVALELFHKSASFTSFDLGLVIERDVELGGDLMFAVNQHFRAGRIGPIRPYHVSDISQLDQALLKLSKGTHIGKMVISYQNPSSLLSVHQSVTHARFLQEANYILVGGMSPLGRCIIRWMVSRGAQHLSVWSRRGGNNLSPEAAALIDEMTSQGVRIQLVTCDVSNREQVLRSMQEANSERAVRGVFNYAVSYQDISFDKMTADMFCQGMAAKVFGTKNLHEATANLPLDFFTMTSSLGTVYAFPTQSTYLAANNFLDYFARYRRQSGLPATTVSLGFINDLGALTQDEVTVNLFARTKGQTVTGSQVLRALEPAFVKHLNTKDQWLGRWEDPLSAANIFTGIDPAVLANMKRAEGKGSASGTVPRWYHDPRVSLMLRAMDDAWRHGNGEDSDKATFGFDDADQSPAVQLRRHFEASIKKTRNGQDKEEVAETVTFVTDAIRTTVAGMLFIDPSVVKENHTVVDHGIDSLLAAEFRTWLNSSFGKNISMLKLMDARSSIGSIAQVIVEEAIGA</sequence>
<proteinExistence type="evidence at protein level"/>
<name>XILA_PENRW</name>
<evidence type="ECO:0000255" key="1"/>
<evidence type="ECO:0000255" key="2">
    <source>
        <dbReference type="PROSITE-ProRule" id="PRU00258"/>
    </source>
</evidence>
<evidence type="ECO:0000255" key="3">
    <source>
        <dbReference type="PROSITE-ProRule" id="PRU01348"/>
    </source>
</evidence>
<evidence type="ECO:0000255" key="4">
    <source>
        <dbReference type="PROSITE-ProRule" id="PRU01363"/>
    </source>
</evidence>
<evidence type="ECO:0000256" key="5">
    <source>
        <dbReference type="SAM" id="MobiDB-lite"/>
    </source>
</evidence>
<evidence type="ECO:0000269" key="6">
    <source>
    </source>
</evidence>
<evidence type="ECO:0000269" key="7">
    <source>
    </source>
</evidence>
<evidence type="ECO:0000303" key="8">
    <source>
    </source>
</evidence>
<evidence type="ECO:0000305" key="9">
    <source>
    </source>
</evidence>